<feature type="chain" id="PRO_0000151798" description="3,4-dihydroxy-2-butanone 4-phosphate synthase">
    <location>
        <begin position="1"/>
        <end position="217"/>
    </location>
</feature>
<feature type="binding site" evidence="1">
    <location>
        <begin position="37"/>
        <end position="38"/>
    </location>
    <ligand>
        <name>D-ribulose 5-phosphate</name>
        <dbReference type="ChEBI" id="CHEBI:58121"/>
    </ligand>
</feature>
<feature type="binding site" evidence="1">
    <location>
        <position position="38"/>
    </location>
    <ligand>
        <name>Mg(2+)</name>
        <dbReference type="ChEBI" id="CHEBI:18420"/>
        <label>1</label>
    </ligand>
</feature>
<feature type="binding site" evidence="1">
    <location>
        <position position="38"/>
    </location>
    <ligand>
        <name>Mg(2+)</name>
        <dbReference type="ChEBI" id="CHEBI:18420"/>
        <label>2</label>
    </ligand>
</feature>
<feature type="binding site" evidence="1">
    <location>
        <position position="42"/>
    </location>
    <ligand>
        <name>D-ribulose 5-phosphate</name>
        <dbReference type="ChEBI" id="CHEBI:58121"/>
    </ligand>
</feature>
<feature type="binding site" evidence="1">
    <location>
        <begin position="150"/>
        <end position="154"/>
    </location>
    <ligand>
        <name>D-ribulose 5-phosphate</name>
        <dbReference type="ChEBI" id="CHEBI:58121"/>
    </ligand>
</feature>
<feature type="binding site" evidence="1">
    <location>
        <position position="153"/>
    </location>
    <ligand>
        <name>Mg(2+)</name>
        <dbReference type="ChEBI" id="CHEBI:18420"/>
        <label>2</label>
    </ligand>
</feature>
<feature type="binding site" evidence="1">
    <location>
        <position position="174"/>
    </location>
    <ligand>
        <name>D-ribulose 5-phosphate</name>
        <dbReference type="ChEBI" id="CHEBI:58121"/>
    </ligand>
</feature>
<feature type="site" description="Essential for catalytic activity" evidence="1">
    <location>
        <position position="136"/>
    </location>
</feature>
<feature type="site" description="Essential for catalytic activity" evidence="1">
    <location>
        <position position="174"/>
    </location>
</feature>
<proteinExistence type="inferred from homology"/>
<name>RIBB_ECO57</name>
<gene>
    <name evidence="1" type="primary">ribB</name>
    <name type="synonym">htrP</name>
    <name type="ordered locus">Z4399</name>
    <name type="ordered locus">ECs3929</name>
</gene>
<accession>P0A7J1</accession>
<accession>P24199</accession>
<reference key="1">
    <citation type="journal article" date="2001" name="Nature">
        <title>Genome sequence of enterohaemorrhagic Escherichia coli O157:H7.</title>
        <authorList>
            <person name="Perna N.T."/>
            <person name="Plunkett G. III"/>
            <person name="Burland V."/>
            <person name="Mau B."/>
            <person name="Glasner J.D."/>
            <person name="Rose D.J."/>
            <person name="Mayhew G.F."/>
            <person name="Evans P.S."/>
            <person name="Gregor J."/>
            <person name="Kirkpatrick H.A."/>
            <person name="Posfai G."/>
            <person name="Hackett J."/>
            <person name="Klink S."/>
            <person name="Boutin A."/>
            <person name="Shao Y."/>
            <person name="Miller L."/>
            <person name="Grotbeck E.J."/>
            <person name="Davis N.W."/>
            <person name="Lim A."/>
            <person name="Dimalanta E.T."/>
            <person name="Potamousis K."/>
            <person name="Apodaca J."/>
            <person name="Anantharaman T.S."/>
            <person name="Lin J."/>
            <person name="Yen G."/>
            <person name="Schwartz D.C."/>
            <person name="Welch R.A."/>
            <person name="Blattner F.R."/>
        </authorList>
    </citation>
    <scope>NUCLEOTIDE SEQUENCE [LARGE SCALE GENOMIC DNA]</scope>
    <source>
        <strain>O157:H7 / EDL933 / ATCC 700927 / EHEC</strain>
    </source>
</reference>
<reference key="2">
    <citation type="journal article" date="2001" name="DNA Res.">
        <title>Complete genome sequence of enterohemorrhagic Escherichia coli O157:H7 and genomic comparison with a laboratory strain K-12.</title>
        <authorList>
            <person name="Hayashi T."/>
            <person name="Makino K."/>
            <person name="Ohnishi M."/>
            <person name="Kurokawa K."/>
            <person name="Ishii K."/>
            <person name="Yokoyama K."/>
            <person name="Han C.-G."/>
            <person name="Ohtsubo E."/>
            <person name="Nakayama K."/>
            <person name="Murata T."/>
            <person name="Tanaka M."/>
            <person name="Tobe T."/>
            <person name="Iida T."/>
            <person name="Takami H."/>
            <person name="Honda T."/>
            <person name="Sasakawa C."/>
            <person name="Ogasawara N."/>
            <person name="Yasunaga T."/>
            <person name="Kuhara S."/>
            <person name="Shiba T."/>
            <person name="Hattori M."/>
            <person name="Shinagawa H."/>
        </authorList>
    </citation>
    <scope>NUCLEOTIDE SEQUENCE [LARGE SCALE GENOMIC DNA]</scope>
    <source>
        <strain>O157:H7 / Sakai / RIMD 0509952 / EHEC</strain>
    </source>
</reference>
<comment type="function">
    <text evidence="1">Catalyzes the conversion of D-ribulose 5-phosphate to formate and 3,4-dihydroxy-2-butanone 4-phosphate.</text>
</comment>
<comment type="catalytic activity">
    <reaction evidence="1">
        <text>D-ribulose 5-phosphate = (2S)-2-hydroxy-3-oxobutyl phosphate + formate + H(+)</text>
        <dbReference type="Rhea" id="RHEA:18457"/>
        <dbReference type="ChEBI" id="CHEBI:15378"/>
        <dbReference type="ChEBI" id="CHEBI:15740"/>
        <dbReference type="ChEBI" id="CHEBI:58121"/>
        <dbReference type="ChEBI" id="CHEBI:58830"/>
        <dbReference type="EC" id="4.1.99.12"/>
    </reaction>
</comment>
<comment type="cofactor">
    <cofactor evidence="1">
        <name>Mg(2+)</name>
        <dbReference type="ChEBI" id="CHEBI:18420"/>
    </cofactor>
    <cofactor evidence="1">
        <name>Mn(2+)</name>
        <dbReference type="ChEBI" id="CHEBI:29035"/>
    </cofactor>
    <text evidence="1">Binds 2 divalent metal cations per subunit. Magnesium or manganese.</text>
</comment>
<comment type="pathway">
    <text evidence="1">Cofactor biosynthesis; riboflavin biosynthesis; 2-hydroxy-3-oxobutyl phosphate from D-ribulose 5-phosphate: step 1/1.</text>
</comment>
<comment type="subunit">
    <text evidence="1">Homodimer.</text>
</comment>
<comment type="similarity">
    <text evidence="1">Belongs to the DHBP synthase family.</text>
</comment>
<protein>
    <recommendedName>
        <fullName evidence="1">3,4-dihydroxy-2-butanone 4-phosphate synthase</fullName>
        <shortName evidence="1">DHBP synthase</shortName>
        <ecNumber evidence="1">4.1.99.12</ecNumber>
    </recommendedName>
</protein>
<dbReference type="EC" id="4.1.99.12" evidence="1"/>
<dbReference type="EMBL" id="AE005174">
    <property type="protein sequence ID" value="AAG58181.1"/>
    <property type="molecule type" value="Genomic_DNA"/>
</dbReference>
<dbReference type="EMBL" id="BA000007">
    <property type="protein sequence ID" value="BAB37352.1"/>
    <property type="molecule type" value="Genomic_DNA"/>
</dbReference>
<dbReference type="PIR" id="A85965">
    <property type="entry name" value="A85965"/>
</dbReference>
<dbReference type="PIR" id="A98120">
    <property type="entry name" value="A98120"/>
</dbReference>
<dbReference type="RefSeq" id="NP_311956.1">
    <property type="nucleotide sequence ID" value="NC_002695.1"/>
</dbReference>
<dbReference type="RefSeq" id="WP_001076997.1">
    <property type="nucleotide sequence ID" value="NZ_VOAI01000009.1"/>
</dbReference>
<dbReference type="SMR" id="P0A7J1"/>
<dbReference type="STRING" id="155864.Z4399"/>
<dbReference type="GeneID" id="916228"/>
<dbReference type="GeneID" id="93778953"/>
<dbReference type="KEGG" id="ece:Z4399"/>
<dbReference type="KEGG" id="ecs:ECs_3929"/>
<dbReference type="PATRIC" id="fig|386585.9.peg.4098"/>
<dbReference type="eggNOG" id="COG0108">
    <property type="taxonomic scope" value="Bacteria"/>
</dbReference>
<dbReference type="HOGENOM" id="CLU_020273_3_0_6"/>
<dbReference type="OMA" id="DAGGLIC"/>
<dbReference type="UniPathway" id="UPA00275">
    <property type="reaction ID" value="UER00399"/>
</dbReference>
<dbReference type="Proteomes" id="UP000000558">
    <property type="component" value="Chromosome"/>
</dbReference>
<dbReference type="Proteomes" id="UP000002519">
    <property type="component" value="Chromosome"/>
</dbReference>
<dbReference type="GO" id="GO:0005829">
    <property type="term" value="C:cytosol"/>
    <property type="evidence" value="ECO:0007669"/>
    <property type="project" value="TreeGrafter"/>
</dbReference>
<dbReference type="GO" id="GO:0008686">
    <property type="term" value="F:3,4-dihydroxy-2-butanone-4-phosphate synthase activity"/>
    <property type="evidence" value="ECO:0007669"/>
    <property type="project" value="UniProtKB-UniRule"/>
</dbReference>
<dbReference type="GO" id="GO:0000287">
    <property type="term" value="F:magnesium ion binding"/>
    <property type="evidence" value="ECO:0007669"/>
    <property type="project" value="UniProtKB-UniRule"/>
</dbReference>
<dbReference type="GO" id="GO:0030145">
    <property type="term" value="F:manganese ion binding"/>
    <property type="evidence" value="ECO:0007669"/>
    <property type="project" value="UniProtKB-UniRule"/>
</dbReference>
<dbReference type="GO" id="GO:0009231">
    <property type="term" value="P:riboflavin biosynthetic process"/>
    <property type="evidence" value="ECO:0007669"/>
    <property type="project" value="UniProtKB-UniRule"/>
</dbReference>
<dbReference type="FunFam" id="3.90.870.10:FF:000002">
    <property type="entry name" value="3,4-dihydroxy-2-butanone 4-phosphate synthase"/>
    <property type="match status" value="1"/>
</dbReference>
<dbReference type="Gene3D" id="3.90.870.10">
    <property type="entry name" value="DHBP synthase"/>
    <property type="match status" value="1"/>
</dbReference>
<dbReference type="HAMAP" id="MF_00180">
    <property type="entry name" value="RibB"/>
    <property type="match status" value="1"/>
</dbReference>
<dbReference type="InterPro" id="IPR017945">
    <property type="entry name" value="DHBP_synth_RibB-like_a/b_dom"/>
</dbReference>
<dbReference type="InterPro" id="IPR000422">
    <property type="entry name" value="DHBP_synthase_RibB"/>
</dbReference>
<dbReference type="NCBIfam" id="TIGR00506">
    <property type="entry name" value="ribB"/>
    <property type="match status" value="1"/>
</dbReference>
<dbReference type="PANTHER" id="PTHR21327:SF38">
    <property type="entry name" value="3,4-DIHYDROXY-2-BUTANONE 4-PHOSPHATE SYNTHASE"/>
    <property type="match status" value="1"/>
</dbReference>
<dbReference type="PANTHER" id="PTHR21327">
    <property type="entry name" value="GTP CYCLOHYDROLASE II-RELATED"/>
    <property type="match status" value="1"/>
</dbReference>
<dbReference type="Pfam" id="PF00926">
    <property type="entry name" value="DHBP_synthase"/>
    <property type="match status" value="1"/>
</dbReference>
<dbReference type="SUPFAM" id="SSF55821">
    <property type="entry name" value="YrdC/RibB"/>
    <property type="match status" value="1"/>
</dbReference>
<sequence length="217" mass="23353">MNQTLLSSFGTPFERVENALAALREGRGVMVLDDEDRENEGDMIFPAETMTVEQMALTIRHGSGIVCLCITEDRRKQLDLPMMVENNTSAYGTGFTVTIEAAEGVTTGVSAADRITTVRAAIADGAKPSDLNRPGHVFPLRAQAGGVLTRGGHTEATIDLMTLAGFKPAGVLCELTNDDGTMARAPECIEFANKHNMALVTIEDLVAYRQAHERKAS</sequence>
<organism>
    <name type="scientific">Escherichia coli O157:H7</name>
    <dbReference type="NCBI Taxonomy" id="83334"/>
    <lineage>
        <taxon>Bacteria</taxon>
        <taxon>Pseudomonadati</taxon>
        <taxon>Pseudomonadota</taxon>
        <taxon>Gammaproteobacteria</taxon>
        <taxon>Enterobacterales</taxon>
        <taxon>Enterobacteriaceae</taxon>
        <taxon>Escherichia</taxon>
    </lineage>
</organism>
<evidence type="ECO:0000255" key="1">
    <source>
        <dbReference type="HAMAP-Rule" id="MF_00180"/>
    </source>
</evidence>
<keyword id="KW-0456">Lyase</keyword>
<keyword id="KW-0460">Magnesium</keyword>
<keyword id="KW-0464">Manganese</keyword>
<keyword id="KW-0479">Metal-binding</keyword>
<keyword id="KW-1185">Reference proteome</keyword>
<keyword id="KW-0686">Riboflavin biosynthesis</keyword>